<gene>
    <name evidence="1" type="primary">trpB</name>
    <name type="ordered locus">Aflv_1105</name>
</gene>
<accession>B7GHQ9</accession>
<dbReference type="EC" id="4.2.1.20" evidence="1"/>
<dbReference type="EMBL" id="CP000922">
    <property type="protein sequence ID" value="ACJ33481.1"/>
    <property type="molecule type" value="Genomic_DNA"/>
</dbReference>
<dbReference type="RefSeq" id="WP_012574738.1">
    <property type="nucleotide sequence ID" value="NC_011567.1"/>
</dbReference>
<dbReference type="SMR" id="B7GHQ9"/>
<dbReference type="STRING" id="491915.Aflv_1105"/>
<dbReference type="GeneID" id="7037362"/>
<dbReference type="KEGG" id="afl:Aflv_1105"/>
<dbReference type="PATRIC" id="fig|491915.6.peg.1128"/>
<dbReference type="eggNOG" id="COG0133">
    <property type="taxonomic scope" value="Bacteria"/>
</dbReference>
<dbReference type="HOGENOM" id="CLU_016734_3_1_9"/>
<dbReference type="UniPathway" id="UPA00035">
    <property type="reaction ID" value="UER00044"/>
</dbReference>
<dbReference type="Proteomes" id="UP000000742">
    <property type="component" value="Chromosome"/>
</dbReference>
<dbReference type="GO" id="GO:0005737">
    <property type="term" value="C:cytoplasm"/>
    <property type="evidence" value="ECO:0007669"/>
    <property type="project" value="TreeGrafter"/>
</dbReference>
<dbReference type="GO" id="GO:0004834">
    <property type="term" value="F:tryptophan synthase activity"/>
    <property type="evidence" value="ECO:0007669"/>
    <property type="project" value="UniProtKB-UniRule"/>
</dbReference>
<dbReference type="CDD" id="cd06446">
    <property type="entry name" value="Trp-synth_B"/>
    <property type="match status" value="1"/>
</dbReference>
<dbReference type="FunFam" id="3.40.50.1100:FF:000001">
    <property type="entry name" value="Tryptophan synthase beta chain"/>
    <property type="match status" value="1"/>
</dbReference>
<dbReference type="FunFam" id="3.40.50.1100:FF:000004">
    <property type="entry name" value="Tryptophan synthase beta chain"/>
    <property type="match status" value="1"/>
</dbReference>
<dbReference type="Gene3D" id="3.40.50.1100">
    <property type="match status" value="2"/>
</dbReference>
<dbReference type="HAMAP" id="MF_00133">
    <property type="entry name" value="Trp_synth_beta"/>
    <property type="match status" value="1"/>
</dbReference>
<dbReference type="InterPro" id="IPR006653">
    <property type="entry name" value="Trp_synth_b_CS"/>
</dbReference>
<dbReference type="InterPro" id="IPR006654">
    <property type="entry name" value="Trp_synth_beta"/>
</dbReference>
<dbReference type="InterPro" id="IPR023026">
    <property type="entry name" value="Trp_synth_beta/beta-like"/>
</dbReference>
<dbReference type="InterPro" id="IPR001926">
    <property type="entry name" value="TrpB-like_PALP"/>
</dbReference>
<dbReference type="InterPro" id="IPR036052">
    <property type="entry name" value="TrpB-like_PALP_sf"/>
</dbReference>
<dbReference type="NCBIfam" id="TIGR00263">
    <property type="entry name" value="trpB"/>
    <property type="match status" value="1"/>
</dbReference>
<dbReference type="PANTHER" id="PTHR48077:SF3">
    <property type="entry name" value="TRYPTOPHAN SYNTHASE"/>
    <property type="match status" value="1"/>
</dbReference>
<dbReference type="PANTHER" id="PTHR48077">
    <property type="entry name" value="TRYPTOPHAN SYNTHASE-RELATED"/>
    <property type="match status" value="1"/>
</dbReference>
<dbReference type="Pfam" id="PF00291">
    <property type="entry name" value="PALP"/>
    <property type="match status" value="1"/>
</dbReference>
<dbReference type="PIRSF" id="PIRSF001413">
    <property type="entry name" value="Trp_syn_beta"/>
    <property type="match status" value="1"/>
</dbReference>
<dbReference type="SUPFAM" id="SSF53686">
    <property type="entry name" value="Tryptophan synthase beta subunit-like PLP-dependent enzymes"/>
    <property type="match status" value="1"/>
</dbReference>
<dbReference type="PROSITE" id="PS00168">
    <property type="entry name" value="TRP_SYNTHASE_BETA"/>
    <property type="match status" value="1"/>
</dbReference>
<keyword id="KW-0028">Amino-acid biosynthesis</keyword>
<keyword id="KW-0057">Aromatic amino acid biosynthesis</keyword>
<keyword id="KW-0456">Lyase</keyword>
<keyword id="KW-0663">Pyridoxal phosphate</keyword>
<keyword id="KW-0822">Tryptophan biosynthesis</keyword>
<evidence type="ECO:0000255" key="1">
    <source>
        <dbReference type="HAMAP-Rule" id="MF_00133"/>
    </source>
</evidence>
<reference key="1">
    <citation type="journal article" date="2008" name="Genome Biol.">
        <title>Encapsulated in silica: genome, proteome and physiology of the thermophilic bacterium Anoxybacillus flavithermus WK1.</title>
        <authorList>
            <person name="Saw J.H."/>
            <person name="Mountain B.W."/>
            <person name="Feng L."/>
            <person name="Omelchenko M.V."/>
            <person name="Hou S."/>
            <person name="Saito J.A."/>
            <person name="Stott M.B."/>
            <person name="Li D."/>
            <person name="Zhao G."/>
            <person name="Wu J."/>
            <person name="Galperin M.Y."/>
            <person name="Koonin E.V."/>
            <person name="Makarova K.S."/>
            <person name="Wolf Y.I."/>
            <person name="Rigden D.J."/>
            <person name="Dunfield P.F."/>
            <person name="Wang L."/>
            <person name="Alam M."/>
        </authorList>
    </citation>
    <scope>NUCLEOTIDE SEQUENCE [LARGE SCALE GENOMIC DNA]</scope>
    <source>
        <strain>DSM 21510 / WK1</strain>
    </source>
</reference>
<protein>
    <recommendedName>
        <fullName evidence="1">Tryptophan synthase beta chain</fullName>
        <ecNumber evidence="1">4.2.1.20</ecNumber>
    </recommendedName>
</protein>
<comment type="function">
    <text evidence="1">The beta subunit is responsible for the synthesis of L-tryptophan from indole and L-serine.</text>
</comment>
<comment type="catalytic activity">
    <reaction evidence="1">
        <text>(1S,2R)-1-C-(indol-3-yl)glycerol 3-phosphate + L-serine = D-glyceraldehyde 3-phosphate + L-tryptophan + H2O</text>
        <dbReference type="Rhea" id="RHEA:10532"/>
        <dbReference type="ChEBI" id="CHEBI:15377"/>
        <dbReference type="ChEBI" id="CHEBI:33384"/>
        <dbReference type="ChEBI" id="CHEBI:57912"/>
        <dbReference type="ChEBI" id="CHEBI:58866"/>
        <dbReference type="ChEBI" id="CHEBI:59776"/>
        <dbReference type="EC" id="4.2.1.20"/>
    </reaction>
</comment>
<comment type="cofactor">
    <cofactor evidence="1">
        <name>pyridoxal 5'-phosphate</name>
        <dbReference type="ChEBI" id="CHEBI:597326"/>
    </cofactor>
</comment>
<comment type="pathway">
    <text evidence="1">Amino-acid biosynthesis; L-tryptophan biosynthesis; L-tryptophan from chorismate: step 5/5.</text>
</comment>
<comment type="subunit">
    <text evidence="1">Tetramer of two alpha and two beta chains.</text>
</comment>
<comment type="similarity">
    <text evidence="1">Belongs to the TrpB family.</text>
</comment>
<name>TRPB_ANOFW</name>
<feature type="chain" id="PRO_1000117747" description="Tryptophan synthase beta chain">
    <location>
        <begin position="1"/>
        <end position="398"/>
    </location>
</feature>
<feature type="modified residue" description="N6-(pyridoxal phosphate)lysine" evidence="1">
    <location>
        <position position="90"/>
    </location>
</feature>
<organism>
    <name type="scientific">Anoxybacillus flavithermus (strain DSM 21510 / WK1)</name>
    <dbReference type="NCBI Taxonomy" id="491915"/>
    <lineage>
        <taxon>Bacteria</taxon>
        <taxon>Bacillati</taxon>
        <taxon>Bacillota</taxon>
        <taxon>Bacilli</taxon>
        <taxon>Bacillales</taxon>
        <taxon>Anoxybacillaceae</taxon>
        <taxon>Anoxybacillus</taxon>
    </lineage>
</organism>
<sequence length="398" mass="43766">MLTLPNERGRFGMFGGKFVPETLMRPLADIERQLYEALADPSFHAEYMHHLYEYSGRPTALTFAKNLTERLGGAKMYFKREDLNHTGAHKINNAIGQALLAKRMGKRKIIAETGAGQHGVAAATVAARFGMECKVFMGEEDVKRQSLNVFRMKLLGAEVIPVTSGNRTLKDATNEAIRYWVEHCDDHFYMIGSVVGPHPYPMMVREFQRIIGEEAREQMLKAEGKLPNTIIACVGGGSNAIGMFHPFLDDDVECIGVEAAGKGVHTTEHAATITKGTKGVIHGSLTYVLQDEHGQIVEPYSISAGLDYPGVGPEHAYLAHIGRVRYESVTDEEAIAALQMTAETEGIIPAIESAHALAKAFQIAPLRSKHETILVCLSGRGDKDVQTVMNYLEGDERK</sequence>
<proteinExistence type="inferred from homology"/>